<gene>
    <name evidence="1" type="primary">trpB</name>
    <name type="ordered locus">SPC_2003</name>
</gene>
<accession>C0Q3N4</accession>
<reference key="1">
    <citation type="journal article" date="2009" name="PLoS ONE">
        <title>Salmonella paratyphi C: genetic divergence from Salmonella choleraesuis and pathogenic convergence with Salmonella typhi.</title>
        <authorList>
            <person name="Liu W.-Q."/>
            <person name="Feng Y."/>
            <person name="Wang Y."/>
            <person name="Zou Q.-H."/>
            <person name="Chen F."/>
            <person name="Guo J.-T."/>
            <person name="Peng Y.-H."/>
            <person name="Jin Y."/>
            <person name="Li Y.-G."/>
            <person name="Hu S.-N."/>
            <person name="Johnston R.N."/>
            <person name="Liu G.-R."/>
            <person name="Liu S.-L."/>
        </authorList>
    </citation>
    <scope>NUCLEOTIDE SEQUENCE [LARGE SCALE GENOMIC DNA]</scope>
    <source>
        <strain>RKS4594</strain>
    </source>
</reference>
<name>TRPB_SALPC</name>
<feature type="chain" id="PRO_1000198753" description="Tryptophan synthase beta chain">
    <location>
        <begin position="1"/>
        <end position="397"/>
    </location>
</feature>
<feature type="modified residue" description="N6-(pyridoxal phosphate)lysine" evidence="1">
    <location>
        <position position="87"/>
    </location>
</feature>
<evidence type="ECO:0000255" key="1">
    <source>
        <dbReference type="HAMAP-Rule" id="MF_00133"/>
    </source>
</evidence>
<proteinExistence type="inferred from homology"/>
<sequence length="397" mass="42868">MTTLLNPYFGEFGGMYVPQILMPALNQLEEAFVSAQKDPEFQAQFADLLKNYAGRPTALTKCQNITAGTRTTLYLKREDLLHGGAHKTNQVLGQALLAKRMGKSEIIAETGAGQHGVASALASALLGLKCRIYMGAKDVERQSPNVFRMRLMGAEVIPVHSGSATLKDACNEALRDWSGSYETAHYMLGTAAGPHPYPTIVREFQRMIGEETKAQILDKEGRLPDAVIACVGGGSNAIGMFADFINDTSVGLIGVEPGGHGIETGEHGAPLKHGRVGIYFGMKAPMMQTADGQIEESYSISAGLDFPSVGPQHAYLNSIGRADYVSITDDEALEAFKTLCRHEGIIPALESSHALAHALKMMREQPEKEQLLVVNLSGRGDKDIFTVHDILKARGEI</sequence>
<keyword id="KW-0028">Amino-acid biosynthesis</keyword>
<keyword id="KW-0057">Aromatic amino acid biosynthesis</keyword>
<keyword id="KW-0456">Lyase</keyword>
<keyword id="KW-0663">Pyridoxal phosphate</keyword>
<keyword id="KW-0822">Tryptophan biosynthesis</keyword>
<protein>
    <recommendedName>
        <fullName evidence="1">Tryptophan synthase beta chain</fullName>
        <ecNumber evidence="1">4.2.1.20</ecNumber>
    </recommendedName>
</protein>
<dbReference type="EC" id="4.2.1.20" evidence="1"/>
<dbReference type="EMBL" id="CP000857">
    <property type="protein sequence ID" value="ACN46139.1"/>
    <property type="molecule type" value="Genomic_DNA"/>
</dbReference>
<dbReference type="RefSeq" id="WP_000209485.1">
    <property type="nucleotide sequence ID" value="NC_012125.1"/>
</dbReference>
<dbReference type="SMR" id="C0Q3N4"/>
<dbReference type="KEGG" id="sei:SPC_2003"/>
<dbReference type="HOGENOM" id="CLU_016734_3_1_6"/>
<dbReference type="UniPathway" id="UPA00035">
    <property type="reaction ID" value="UER00044"/>
</dbReference>
<dbReference type="Proteomes" id="UP000001599">
    <property type="component" value="Chromosome"/>
</dbReference>
<dbReference type="GO" id="GO:0005737">
    <property type="term" value="C:cytoplasm"/>
    <property type="evidence" value="ECO:0007669"/>
    <property type="project" value="TreeGrafter"/>
</dbReference>
<dbReference type="GO" id="GO:0004834">
    <property type="term" value="F:tryptophan synthase activity"/>
    <property type="evidence" value="ECO:0007669"/>
    <property type="project" value="UniProtKB-UniRule"/>
</dbReference>
<dbReference type="CDD" id="cd06446">
    <property type="entry name" value="Trp-synth_B"/>
    <property type="match status" value="1"/>
</dbReference>
<dbReference type="FunFam" id="3.40.50.1100:FF:000001">
    <property type="entry name" value="Tryptophan synthase beta chain"/>
    <property type="match status" value="1"/>
</dbReference>
<dbReference type="FunFam" id="3.40.50.1100:FF:000004">
    <property type="entry name" value="Tryptophan synthase beta chain"/>
    <property type="match status" value="1"/>
</dbReference>
<dbReference type="Gene3D" id="3.40.50.1100">
    <property type="match status" value="2"/>
</dbReference>
<dbReference type="HAMAP" id="MF_00133">
    <property type="entry name" value="Trp_synth_beta"/>
    <property type="match status" value="1"/>
</dbReference>
<dbReference type="InterPro" id="IPR006653">
    <property type="entry name" value="Trp_synth_b_CS"/>
</dbReference>
<dbReference type="InterPro" id="IPR006654">
    <property type="entry name" value="Trp_synth_beta"/>
</dbReference>
<dbReference type="InterPro" id="IPR023026">
    <property type="entry name" value="Trp_synth_beta/beta-like"/>
</dbReference>
<dbReference type="InterPro" id="IPR001926">
    <property type="entry name" value="TrpB-like_PALP"/>
</dbReference>
<dbReference type="InterPro" id="IPR036052">
    <property type="entry name" value="TrpB-like_PALP_sf"/>
</dbReference>
<dbReference type="NCBIfam" id="TIGR00263">
    <property type="entry name" value="trpB"/>
    <property type="match status" value="1"/>
</dbReference>
<dbReference type="PANTHER" id="PTHR48077:SF3">
    <property type="entry name" value="TRYPTOPHAN SYNTHASE"/>
    <property type="match status" value="1"/>
</dbReference>
<dbReference type="PANTHER" id="PTHR48077">
    <property type="entry name" value="TRYPTOPHAN SYNTHASE-RELATED"/>
    <property type="match status" value="1"/>
</dbReference>
<dbReference type="Pfam" id="PF00291">
    <property type="entry name" value="PALP"/>
    <property type="match status" value="1"/>
</dbReference>
<dbReference type="PIRSF" id="PIRSF001413">
    <property type="entry name" value="Trp_syn_beta"/>
    <property type="match status" value="1"/>
</dbReference>
<dbReference type="SUPFAM" id="SSF53686">
    <property type="entry name" value="Tryptophan synthase beta subunit-like PLP-dependent enzymes"/>
    <property type="match status" value="1"/>
</dbReference>
<dbReference type="PROSITE" id="PS00168">
    <property type="entry name" value="TRP_SYNTHASE_BETA"/>
    <property type="match status" value="1"/>
</dbReference>
<organism>
    <name type="scientific">Salmonella paratyphi C (strain RKS4594)</name>
    <dbReference type="NCBI Taxonomy" id="476213"/>
    <lineage>
        <taxon>Bacteria</taxon>
        <taxon>Pseudomonadati</taxon>
        <taxon>Pseudomonadota</taxon>
        <taxon>Gammaproteobacteria</taxon>
        <taxon>Enterobacterales</taxon>
        <taxon>Enterobacteriaceae</taxon>
        <taxon>Salmonella</taxon>
    </lineage>
</organism>
<comment type="function">
    <text evidence="1">The beta subunit is responsible for the synthesis of L-tryptophan from indole and L-serine.</text>
</comment>
<comment type="catalytic activity">
    <reaction evidence="1">
        <text>(1S,2R)-1-C-(indol-3-yl)glycerol 3-phosphate + L-serine = D-glyceraldehyde 3-phosphate + L-tryptophan + H2O</text>
        <dbReference type="Rhea" id="RHEA:10532"/>
        <dbReference type="ChEBI" id="CHEBI:15377"/>
        <dbReference type="ChEBI" id="CHEBI:33384"/>
        <dbReference type="ChEBI" id="CHEBI:57912"/>
        <dbReference type="ChEBI" id="CHEBI:58866"/>
        <dbReference type="ChEBI" id="CHEBI:59776"/>
        <dbReference type="EC" id="4.2.1.20"/>
    </reaction>
</comment>
<comment type="cofactor">
    <cofactor evidence="1">
        <name>pyridoxal 5'-phosphate</name>
        <dbReference type="ChEBI" id="CHEBI:597326"/>
    </cofactor>
</comment>
<comment type="pathway">
    <text evidence="1">Amino-acid biosynthesis; L-tryptophan biosynthesis; L-tryptophan from chorismate: step 5/5.</text>
</comment>
<comment type="subunit">
    <text evidence="1">Tetramer of two alpha and two beta chains.</text>
</comment>
<comment type="similarity">
    <text evidence="1">Belongs to the TrpB family.</text>
</comment>